<name>GLPG_ECOUT</name>
<comment type="function">
    <text evidence="1">Rhomboid-type serine protease that catalyzes intramembrane proteolysis.</text>
</comment>
<comment type="catalytic activity">
    <reaction evidence="1">
        <text>Cleaves type-1 transmembrane domains using a catalytic dyad composed of serine and histidine that are contributed by different transmembrane domains.</text>
        <dbReference type="EC" id="3.4.21.105"/>
    </reaction>
</comment>
<comment type="subcellular location">
    <subcellularLocation>
        <location evidence="1">Cell inner membrane</location>
        <topology evidence="1">Multi-pass membrane protein</topology>
    </subcellularLocation>
</comment>
<comment type="similarity">
    <text evidence="1">Belongs to the peptidase S54 family.</text>
</comment>
<proteinExistence type="inferred from homology"/>
<protein>
    <recommendedName>
        <fullName evidence="1">Rhomboid protease GlpG</fullName>
        <ecNumber evidence="1">3.4.21.105</ecNumber>
    </recommendedName>
    <alternativeName>
        <fullName evidence="1">Intramembrane serine protease</fullName>
    </alternativeName>
</protein>
<reference key="1">
    <citation type="journal article" date="2006" name="Proc. Natl. Acad. Sci. U.S.A.">
        <title>Identification of genes subject to positive selection in uropathogenic strains of Escherichia coli: a comparative genomics approach.</title>
        <authorList>
            <person name="Chen S.L."/>
            <person name="Hung C.-S."/>
            <person name="Xu J."/>
            <person name="Reigstad C.S."/>
            <person name="Magrini V."/>
            <person name="Sabo A."/>
            <person name="Blasiar D."/>
            <person name="Bieri T."/>
            <person name="Meyer R.R."/>
            <person name="Ozersky P."/>
            <person name="Armstrong J.R."/>
            <person name="Fulton R.S."/>
            <person name="Latreille J.P."/>
            <person name="Spieth J."/>
            <person name="Hooton T.M."/>
            <person name="Mardis E.R."/>
            <person name="Hultgren S.J."/>
            <person name="Gordon J.I."/>
        </authorList>
    </citation>
    <scope>NUCLEOTIDE SEQUENCE [LARGE SCALE GENOMIC DNA]</scope>
    <source>
        <strain>UTI89 / UPEC</strain>
    </source>
</reference>
<organism>
    <name type="scientific">Escherichia coli (strain UTI89 / UPEC)</name>
    <dbReference type="NCBI Taxonomy" id="364106"/>
    <lineage>
        <taxon>Bacteria</taxon>
        <taxon>Pseudomonadati</taxon>
        <taxon>Pseudomonadota</taxon>
        <taxon>Gammaproteobacteria</taxon>
        <taxon>Enterobacterales</taxon>
        <taxon>Enterobacteriaceae</taxon>
        <taxon>Escherichia</taxon>
    </lineage>
</organism>
<sequence length="276" mass="31307">MLMITSFANPRVAQAFVDYMATQGVILTIQQHNQSDVWLADESQAERVRAELARFLENPADPRYLAASWQAGHTGSGLHYRRYPFFAALRERAGPVTWVMMIACVVVFIAMQILGDQEVMLWLAWPFDPTLKFEFWRYFTHALMHFSLMHILFNLLWWWYLGGAVEKRLGSGKLIVITLISALLSGYVQQKFSGPWFGGLSGVVYALMGYVWLRGERDPQSGIYLQRGLIIFALIWIVAGWFDLFGMSMANGAHIAGLAVGLAMAFVDSLNARKRK</sequence>
<keyword id="KW-0997">Cell inner membrane</keyword>
<keyword id="KW-1003">Cell membrane</keyword>
<keyword id="KW-0378">Hydrolase</keyword>
<keyword id="KW-0472">Membrane</keyword>
<keyword id="KW-0645">Protease</keyword>
<keyword id="KW-0720">Serine protease</keyword>
<keyword id="KW-0812">Transmembrane</keyword>
<keyword id="KW-1133">Transmembrane helix</keyword>
<accession>Q1R5L1</accession>
<evidence type="ECO:0000255" key="1">
    <source>
        <dbReference type="HAMAP-Rule" id="MF_01594"/>
    </source>
</evidence>
<dbReference type="EC" id="3.4.21.105" evidence="1"/>
<dbReference type="EMBL" id="CP000243">
    <property type="protein sequence ID" value="ABE09353.1"/>
    <property type="molecule type" value="Genomic_DNA"/>
</dbReference>
<dbReference type="RefSeq" id="WP_000928723.1">
    <property type="nucleotide sequence ID" value="NZ_CP064825.1"/>
</dbReference>
<dbReference type="SMR" id="Q1R5L1"/>
<dbReference type="MEROPS" id="S54.016"/>
<dbReference type="GeneID" id="86862178"/>
<dbReference type="KEGG" id="eci:UTI89_C3924"/>
<dbReference type="HOGENOM" id="CLU_058989_0_0_6"/>
<dbReference type="Proteomes" id="UP000001952">
    <property type="component" value="Chromosome"/>
</dbReference>
<dbReference type="GO" id="GO:0005886">
    <property type="term" value="C:plasma membrane"/>
    <property type="evidence" value="ECO:0007669"/>
    <property type="project" value="UniProtKB-SubCell"/>
</dbReference>
<dbReference type="GO" id="GO:0004252">
    <property type="term" value="F:serine-type endopeptidase activity"/>
    <property type="evidence" value="ECO:0007669"/>
    <property type="project" value="UniProtKB-UniRule"/>
</dbReference>
<dbReference type="GO" id="GO:0006508">
    <property type="term" value="P:proteolysis"/>
    <property type="evidence" value="ECO:0007669"/>
    <property type="project" value="UniProtKB-UniRule"/>
</dbReference>
<dbReference type="FunFam" id="1.20.1540.10:FF:000003">
    <property type="entry name" value="Rhomboid protease GlpG"/>
    <property type="match status" value="1"/>
</dbReference>
<dbReference type="FunFam" id="3.30.70.2350:FF:000001">
    <property type="entry name" value="Rhomboid protease GlpG"/>
    <property type="match status" value="1"/>
</dbReference>
<dbReference type="Gene3D" id="3.30.70.2350">
    <property type="match status" value="1"/>
</dbReference>
<dbReference type="Gene3D" id="1.20.1540.10">
    <property type="entry name" value="Rhomboid-like"/>
    <property type="match status" value="1"/>
</dbReference>
<dbReference type="HAMAP" id="MF_01594">
    <property type="entry name" value="Rhomboid_GlpG"/>
    <property type="match status" value="1"/>
</dbReference>
<dbReference type="InterPro" id="IPR038236">
    <property type="entry name" value="GlpG_N_sf"/>
</dbReference>
<dbReference type="InterPro" id="IPR022732">
    <property type="entry name" value="Peptidase_S54_GlpG_N"/>
</dbReference>
<dbReference type="InterPro" id="IPR022764">
    <property type="entry name" value="Peptidase_S54_rhomboid_dom"/>
</dbReference>
<dbReference type="InterPro" id="IPR035952">
    <property type="entry name" value="Rhomboid-like_sf"/>
</dbReference>
<dbReference type="InterPro" id="IPR023662">
    <property type="entry name" value="Rhomboid_protease_GlpG"/>
</dbReference>
<dbReference type="NCBIfam" id="NF008155">
    <property type="entry name" value="PRK10907.1"/>
    <property type="match status" value="1"/>
</dbReference>
<dbReference type="NCBIfam" id="TIGR04239">
    <property type="entry name" value="rhombo_GlpG"/>
    <property type="match status" value="1"/>
</dbReference>
<dbReference type="PANTHER" id="PTHR43066:SF26">
    <property type="entry name" value="RHOMBOID PROTEASE GLPG"/>
    <property type="match status" value="1"/>
</dbReference>
<dbReference type="PANTHER" id="PTHR43066">
    <property type="entry name" value="RHOMBOID-RELATED PROTEIN"/>
    <property type="match status" value="1"/>
</dbReference>
<dbReference type="Pfam" id="PF01694">
    <property type="entry name" value="Rhomboid"/>
    <property type="match status" value="1"/>
</dbReference>
<dbReference type="Pfam" id="PF12122">
    <property type="entry name" value="Rhomboid_N"/>
    <property type="match status" value="1"/>
</dbReference>
<dbReference type="SUPFAM" id="SSF144091">
    <property type="entry name" value="Rhomboid-like"/>
    <property type="match status" value="1"/>
</dbReference>
<gene>
    <name evidence="1" type="primary">glpG</name>
    <name type="ordered locus">UTI89_C3924</name>
</gene>
<feature type="chain" id="PRO_0000321679" description="Rhomboid protease GlpG">
    <location>
        <begin position="1"/>
        <end position="276"/>
    </location>
</feature>
<feature type="transmembrane region" description="Helical" evidence="1">
    <location>
        <begin position="94"/>
        <end position="114"/>
    </location>
</feature>
<feature type="transmembrane region" description="Helical" evidence="1">
    <location>
        <begin position="142"/>
        <end position="162"/>
    </location>
</feature>
<feature type="transmembrane region" description="Helical" evidence="1">
    <location>
        <begin position="169"/>
        <end position="189"/>
    </location>
</feature>
<feature type="transmembrane region" description="Helical" evidence="1">
    <location>
        <begin position="192"/>
        <end position="212"/>
    </location>
</feature>
<feature type="transmembrane region" description="Helical" evidence="1">
    <location>
        <begin position="229"/>
        <end position="249"/>
    </location>
</feature>
<feature type="transmembrane region" description="Helical" evidence="1">
    <location>
        <begin position="250"/>
        <end position="270"/>
    </location>
</feature>
<feature type="active site" description="Nucleophile" evidence="1">
    <location>
        <position position="201"/>
    </location>
</feature>
<feature type="active site" evidence="1">
    <location>
        <position position="254"/>
    </location>
</feature>